<dbReference type="EMBL" id="L77117">
    <property type="protein sequence ID" value="AAB98164.1"/>
    <property type="molecule type" value="Genomic_DNA"/>
</dbReference>
<dbReference type="RefSeq" id="WP_010869674.1">
    <property type="nucleotide sequence ID" value="NC_000909.1"/>
</dbReference>
<dbReference type="SMR" id="P54017"/>
<dbReference type="FunCoup" id="P54017">
    <property type="interactions" value="162"/>
</dbReference>
<dbReference type="STRING" id="243232.MJ_0179"/>
<dbReference type="PaxDb" id="243232-MJ_0179"/>
<dbReference type="EnsemblBacteria" id="AAB98164">
    <property type="protein sequence ID" value="AAB98164"/>
    <property type="gene ID" value="MJ_0179"/>
</dbReference>
<dbReference type="GeneID" id="1451026"/>
<dbReference type="KEGG" id="mja:MJ_0179"/>
<dbReference type="eggNOG" id="arCOG04067">
    <property type="taxonomic scope" value="Archaea"/>
</dbReference>
<dbReference type="HOGENOM" id="CLU_036235_0_3_2"/>
<dbReference type="InParanoid" id="P54017"/>
<dbReference type="OrthoDB" id="5987at2157"/>
<dbReference type="PhylomeDB" id="P54017"/>
<dbReference type="Proteomes" id="UP000000805">
    <property type="component" value="Chromosome"/>
</dbReference>
<dbReference type="GO" id="GO:0022625">
    <property type="term" value="C:cytosolic large ribosomal subunit"/>
    <property type="evidence" value="ECO:0000318"/>
    <property type="project" value="GO_Central"/>
</dbReference>
<dbReference type="GO" id="GO:0003723">
    <property type="term" value="F:RNA binding"/>
    <property type="evidence" value="ECO:0000318"/>
    <property type="project" value="GO_Central"/>
</dbReference>
<dbReference type="GO" id="GO:0019843">
    <property type="term" value="F:rRNA binding"/>
    <property type="evidence" value="ECO:0007669"/>
    <property type="project" value="UniProtKB-UniRule"/>
</dbReference>
<dbReference type="GO" id="GO:0003735">
    <property type="term" value="F:structural constituent of ribosome"/>
    <property type="evidence" value="ECO:0000318"/>
    <property type="project" value="GO_Central"/>
</dbReference>
<dbReference type="GO" id="GO:0002181">
    <property type="term" value="P:cytoplasmic translation"/>
    <property type="evidence" value="ECO:0000318"/>
    <property type="project" value="GO_Central"/>
</dbReference>
<dbReference type="FunFam" id="2.40.50.140:FF:000020">
    <property type="entry name" value="60S ribosomal protein L2"/>
    <property type="match status" value="1"/>
</dbReference>
<dbReference type="FunFam" id="4.10.950.10:FF:000002">
    <property type="entry name" value="60S ribosomal protein L2"/>
    <property type="match status" value="1"/>
</dbReference>
<dbReference type="FunFam" id="2.30.30.30:FF:000006">
    <property type="entry name" value="60S ribosomal protein L8"/>
    <property type="match status" value="1"/>
</dbReference>
<dbReference type="Gene3D" id="2.30.30.30">
    <property type="match status" value="1"/>
</dbReference>
<dbReference type="Gene3D" id="2.40.50.140">
    <property type="entry name" value="Nucleic acid-binding proteins"/>
    <property type="match status" value="1"/>
</dbReference>
<dbReference type="Gene3D" id="4.10.950.10">
    <property type="entry name" value="Ribosomal protein L2, domain 3"/>
    <property type="match status" value="1"/>
</dbReference>
<dbReference type="HAMAP" id="MF_01320_A">
    <property type="entry name" value="Ribosomal_uL2_A"/>
    <property type="match status" value="1"/>
</dbReference>
<dbReference type="InterPro" id="IPR012340">
    <property type="entry name" value="NA-bd_OB-fold"/>
</dbReference>
<dbReference type="InterPro" id="IPR014722">
    <property type="entry name" value="Rib_uL2_dom2"/>
</dbReference>
<dbReference type="InterPro" id="IPR002171">
    <property type="entry name" value="Ribosomal_uL2"/>
</dbReference>
<dbReference type="InterPro" id="IPR023672">
    <property type="entry name" value="Ribosomal_uL2_arc_euk"/>
</dbReference>
<dbReference type="InterPro" id="IPR022669">
    <property type="entry name" value="Ribosomal_uL2_C"/>
</dbReference>
<dbReference type="InterPro" id="IPR022671">
    <property type="entry name" value="Ribosomal_uL2_CS"/>
</dbReference>
<dbReference type="InterPro" id="IPR014726">
    <property type="entry name" value="Ribosomal_uL2_dom3"/>
</dbReference>
<dbReference type="InterPro" id="IPR022666">
    <property type="entry name" value="Ribosomal_uL2_RNA-bd_dom"/>
</dbReference>
<dbReference type="InterPro" id="IPR008991">
    <property type="entry name" value="Translation_prot_SH3-like_sf"/>
</dbReference>
<dbReference type="NCBIfam" id="NF007180">
    <property type="entry name" value="PRK09612.1"/>
    <property type="match status" value="1"/>
</dbReference>
<dbReference type="PANTHER" id="PTHR13691:SF16">
    <property type="entry name" value="LARGE RIBOSOMAL SUBUNIT PROTEIN UL2"/>
    <property type="match status" value="1"/>
</dbReference>
<dbReference type="PANTHER" id="PTHR13691">
    <property type="entry name" value="RIBOSOMAL PROTEIN L2"/>
    <property type="match status" value="1"/>
</dbReference>
<dbReference type="Pfam" id="PF00181">
    <property type="entry name" value="Ribosomal_L2"/>
    <property type="match status" value="1"/>
</dbReference>
<dbReference type="Pfam" id="PF03947">
    <property type="entry name" value="Ribosomal_L2_C"/>
    <property type="match status" value="1"/>
</dbReference>
<dbReference type="PIRSF" id="PIRSF002158">
    <property type="entry name" value="Ribosomal_L2"/>
    <property type="match status" value="1"/>
</dbReference>
<dbReference type="SMART" id="SM01383">
    <property type="entry name" value="Ribosomal_L2"/>
    <property type="match status" value="1"/>
</dbReference>
<dbReference type="SMART" id="SM01382">
    <property type="entry name" value="Ribosomal_L2_C"/>
    <property type="match status" value="1"/>
</dbReference>
<dbReference type="SUPFAM" id="SSF50249">
    <property type="entry name" value="Nucleic acid-binding proteins"/>
    <property type="match status" value="1"/>
</dbReference>
<dbReference type="SUPFAM" id="SSF50104">
    <property type="entry name" value="Translation proteins SH3-like domain"/>
    <property type="match status" value="1"/>
</dbReference>
<dbReference type="PROSITE" id="PS00467">
    <property type="entry name" value="RIBOSOMAL_L2"/>
    <property type="match status" value="1"/>
</dbReference>
<gene>
    <name evidence="1" type="primary">rpl2</name>
    <name type="ordered locus">MJ0179</name>
</gene>
<sequence length="242" mass="26103">MGKRLISQRRGRGSSVYTCPSHKRRGEAKYRRFDELEKKGKVLGKIVDILHDPGRSAPVAKVEYETGEEGLLVVPEGVKVGDIIECGVSAEIKPGNILPLGAIPEGIPVFNIETVPGDGGKLVRAGGCYAHILTHDGERTYVKLPSGHIKALHSMCRATIGVVAGGGRKEKPFVKAGKKYHAMKAKAVKWPRVRGVAMNAVDHPFGGGRHQHTGKPTTVSRKKVPPGRKVGHISARRTGVRK</sequence>
<accession>P54017</accession>
<evidence type="ECO:0000255" key="1">
    <source>
        <dbReference type="HAMAP-Rule" id="MF_01320"/>
    </source>
</evidence>
<evidence type="ECO:0000256" key="2">
    <source>
        <dbReference type="SAM" id="MobiDB-lite"/>
    </source>
</evidence>
<evidence type="ECO:0000305" key="3"/>
<reference key="1">
    <citation type="journal article" date="1996" name="Science">
        <title>Complete genome sequence of the methanogenic archaeon, Methanococcus jannaschii.</title>
        <authorList>
            <person name="Bult C.J."/>
            <person name="White O."/>
            <person name="Olsen G.J."/>
            <person name="Zhou L."/>
            <person name="Fleischmann R.D."/>
            <person name="Sutton G.G."/>
            <person name="Blake J.A."/>
            <person name="FitzGerald L.M."/>
            <person name="Clayton R.A."/>
            <person name="Gocayne J.D."/>
            <person name="Kerlavage A.R."/>
            <person name="Dougherty B.A."/>
            <person name="Tomb J.-F."/>
            <person name="Adams M.D."/>
            <person name="Reich C.I."/>
            <person name="Overbeek R."/>
            <person name="Kirkness E.F."/>
            <person name="Weinstock K.G."/>
            <person name="Merrick J.M."/>
            <person name="Glodek A."/>
            <person name="Scott J.L."/>
            <person name="Geoghagen N.S.M."/>
            <person name="Weidman J.F."/>
            <person name="Fuhrmann J.L."/>
            <person name="Nguyen D."/>
            <person name="Utterback T.R."/>
            <person name="Kelley J.M."/>
            <person name="Peterson J.D."/>
            <person name="Sadow P.W."/>
            <person name="Hanna M.C."/>
            <person name="Cotton M.D."/>
            <person name="Roberts K.M."/>
            <person name="Hurst M.A."/>
            <person name="Kaine B.P."/>
            <person name="Borodovsky M."/>
            <person name="Klenk H.-P."/>
            <person name="Fraser C.M."/>
            <person name="Smith H.O."/>
            <person name="Woese C.R."/>
            <person name="Venter J.C."/>
        </authorList>
    </citation>
    <scope>NUCLEOTIDE SEQUENCE [LARGE SCALE GENOMIC DNA]</scope>
    <source>
        <strain>ATCC 43067 / DSM 2661 / JAL-1 / JCM 10045 / NBRC 100440</strain>
    </source>
</reference>
<proteinExistence type="inferred from homology"/>
<keyword id="KW-1185">Reference proteome</keyword>
<keyword id="KW-0687">Ribonucleoprotein</keyword>
<keyword id="KW-0689">Ribosomal protein</keyword>
<keyword id="KW-0694">RNA-binding</keyword>
<keyword id="KW-0699">rRNA-binding</keyword>
<comment type="function">
    <text evidence="1">One of the primary rRNA binding proteins. Required for association of the 30S and 50S subunits to form the 70S ribosome, for tRNA binding and peptide bond formation. It has been suggested to have peptidyltransferase activity; this is somewhat controversial. Makes several contacts with the 16S rRNA in the 70S ribosome.</text>
</comment>
<comment type="subunit">
    <text evidence="1">Part of the 50S ribosomal subunit. Forms a bridge to the 30S subunit in the 70S ribosome.</text>
</comment>
<comment type="similarity">
    <text evidence="1">Belongs to the universal ribosomal protein uL2 family.</text>
</comment>
<protein>
    <recommendedName>
        <fullName evidence="1">Large ribosomal subunit protein uL2</fullName>
    </recommendedName>
    <alternativeName>
        <fullName evidence="3">50S ribosomal protein L2</fullName>
    </alternativeName>
</protein>
<feature type="chain" id="PRO_0000129715" description="Large ribosomal subunit protein uL2">
    <location>
        <begin position="1"/>
        <end position="242"/>
    </location>
</feature>
<feature type="region of interest" description="Disordered" evidence="2">
    <location>
        <begin position="201"/>
        <end position="242"/>
    </location>
</feature>
<feature type="compositionally biased region" description="Basic residues" evidence="2">
    <location>
        <begin position="220"/>
        <end position="242"/>
    </location>
</feature>
<name>RL2_METJA</name>
<organism>
    <name type="scientific">Methanocaldococcus jannaschii (strain ATCC 43067 / DSM 2661 / JAL-1 / JCM 10045 / NBRC 100440)</name>
    <name type="common">Methanococcus jannaschii</name>
    <dbReference type="NCBI Taxonomy" id="243232"/>
    <lineage>
        <taxon>Archaea</taxon>
        <taxon>Methanobacteriati</taxon>
        <taxon>Methanobacteriota</taxon>
        <taxon>Methanomada group</taxon>
        <taxon>Methanococci</taxon>
        <taxon>Methanococcales</taxon>
        <taxon>Methanocaldococcaceae</taxon>
        <taxon>Methanocaldococcus</taxon>
    </lineage>
</organism>